<accession>C0MHG3</accession>
<proteinExistence type="inferred from homology"/>
<gene>
    <name evidence="1" type="primary">rplK</name>
    <name type="ordered locus">SZO_04890</name>
</gene>
<dbReference type="EMBL" id="FM204884">
    <property type="protein sequence ID" value="CAW98437.1"/>
    <property type="molecule type" value="Genomic_DNA"/>
</dbReference>
<dbReference type="SMR" id="C0MHG3"/>
<dbReference type="KEGG" id="seq:SZO_04890"/>
<dbReference type="eggNOG" id="COG0080">
    <property type="taxonomic scope" value="Bacteria"/>
</dbReference>
<dbReference type="HOGENOM" id="CLU_074237_2_1_9"/>
<dbReference type="Proteomes" id="UP000001368">
    <property type="component" value="Chromosome"/>
</dbReference>
<dbReference type="GO" id="GO:0022625">
    <property type="term" value="C:cytosolic large ribosomal subunit"/>
    <property type="evidence" value="ECO:0007669"/>
    <property type="project" value="TreeGrafter"/>
</dbReference>
<dbReference type="GO" id="GO:0070180">
    <property type="term" value="F:large ribosomal subunit rRNA binding"/>
    <property type="evidence" value="ECO:0007669"/>
    <property type="project" value="UniProtKB-UniRule"/>
</dbReference>
<dbReference type="GO" id="GO:0003735">
    <property type="term" value="F:structural constituent of ribosome"/>
    <property type="evidence" value="ECO:0007669"/>
    <property type="project" value="InterPro"/>
</dbReference>
<dbReference type="GO" id="GO:0006412">
    <property type="term" value="P:translation"/>
    <property type="evidence" value="ECO:0007669"/>
    <property type="project" value="UniProtKB-UniRule"/>
</dbReference>
<dbReference type="CDD" id="cd00349">
    <property type="entry name" value="Ribosomal_L11"/>
    <property type="match status" value="1"/>
</dbReference>
<dbReference type="FunFam" id="1.10.10.250:FF:000001">
    <property type="entry name" value="50S ribosomal protein L11"/>
    <property type="match status" value="1"/>
</dbReference>
<dbReference type="FunFam" id="3.30.1550.10:FF:000001">
    <property type="entry name" value="50S ribosomal protein L11"/>
    <property type="match status" value="1"/>
</dbReference>
<dbReference type="Gene3D" id="1.10.10.250">
    <property type="entry name" value="Ribosomal protein L11, C-terminal domain"/>
    <property type="match status" value="1"/>
</dbReference>
<dbReference type="Gene3D" id="3.30.1550.10">
    <property type="entry name" value="Ribosomal protein L11/L12, N-terminal domain"/>
    <property type="match status" value="1"/>
</dbReference>
<dbReference type="HAMAP" id="MF_00736">
    <property type="entry name" value="Ribosomal_uL11"/>
    <property type="match status" value="1"/>
</dbReference>
<dbReference type="InterPro" id="IPR000911">
    <property type="entry name" value="Ribosomal_uL11"/>
</dbReference>
<dbReference type="InterPro" id="IPR006519">
    <property type="entry name" value="Ribosomal_uL11_bac-typ"/>
</dbReference>
<dbReference type="InterPro" id="IPR020783">
    <property type="entry name" value="Ribosomal_uL11_C"/>
</dbReference>
<dbReference type="InterPro" id="IPR036769">
    <property type="entry name" value="Ribosomal_uL11_C_sf"/>
</dbReference>
<dbReference type="InterPro" id="IPR020785">
    <property type="entry name" value="Ribosomal_uL11_CS"/>
</dbReference>
<dbReference type="InterPro" id="IPR020784">
    <property type="entry name" value="Ribosomal_uL11_N"/>
</dbReference>
<dbReference type="InterPro" id="IPR036796">
    <property type="entry name" value="Ribosomal_uL11_N_sf"/>
</dbReference>
<dbReference type="NCBIfam" id="TIGR01632">
    <property type="entry name" value="L11_bact"/>
    <property type="match status" value="1"/>
</dbReference>
<dbReference type="PANTHER" id="PTHR11661">
    <property type="entry name" value="60S RIBOSOMAL PROTEIN L12"/>
    <property type="match status" value="1"/>
</dbReference>
<dbReference type="PANTHER" id="PTHR11661:SF1">
    <property type="entry name" value="LARGE RIBOSOMAL SUBUNIT PROTEIN UL11M"/>
    <property type="match status" value="1"/>
</dbReference>
<dbReference type="Pfam" id="PF00298">
    <property type="entry name" value="Ribosomal_L11"/>
    <property type="match status" value="1"/>
</dbReference>
<dbReference type="Pfam" id="PF03946">
    <property type="entry name" value="Ribosomal_L11_N"/>
    <property type="match status" value="1"/>
</dbReference>
<dbReference type="SMART" id="SM00649">
    <property type="entry name" value="RL11"/>
    <property type="match status" value="1"/>
</dbReference>
<dbReference type="SUPFAM" id="SSF54747">
    <property type="entry name" value="Ribosomal L11/L12e N-terminal domain"/>
    <property type="match status" value="1"/>
</dbReference>
<dbReference type="SUPFAM" id="SSF46906">
    <property type="entry name" value="Ribosomal protein L11, C-terminal domain"/>
    <property type="match status" value="1"/>
</dbReference>
<dbReference type="PROSITE" id="PS00359">
    <property type="entry name" value="RIBOSOMAL_L11"/>
    <property type="match status" value="1"/>
</dbReference>
<feature type="chain" id="PRO_1000212787" description="Large ribosomal subunit protein uL11">
    <location>
        <begin position="1"/>
        <end position="141"/>
    </location>
</feature>
<protein>
    <recommendedName>
        <fullName evidence="1">Large ribosomal subunit protein uL11</fullName>
    </recommendedName>
    <alternativeName>
        <fullName evidence="2">50S ribosomal protein L11</fullName>
    </alternativeName>
</protein>
<reference key="1">
    <citation type="journal article" date="2009" name="PLoS Pathog.">
        <title>Genomic evidence for the evolution of Streptococcus equi: host restriction, increased virulence, and genetic exchange with human pathogens.</title>
        <authorList>
            <person name="Holden M.T.G."/>
            <person name="Heather Z."/>
            <person name="Paillot R."/>
            <person name="Steward K.F."/>
            <person name="Webb K."/>
            <person name="Ainslie F."/>
            <person name="Jourdan T."/>
            <person name="Bason N.C."/>
            <person name="Holroyd N.E."/>
            <person name="Mungall K."/>
            <person name="Quail M.A."/>
            <person name="Sanders M."/>
            <person name="Simmonds M."/>
            <person name="Willey D."/>
            <person name="Brooks K."/>
            <person name="Aanensen D.M."/>
            <person name="Spratt B.G."/>
            <person name="Jolley K.A."/>
            <person name="Maiden M.C.J."/>
            <person name="Kehoe M."/>
            <person name="Chanter N."/>
            <person name="Bentley S.D."/>
            <person name="Robinson C."/>
            <person name="Maskell D.J."/>
            <person name="Parkhill J."/>
            <person name="Waller A.S."/>
        </authorList>
    </citation>
    <scope>NUCLEOTIDE SEQUENCE [LARGE SCALE GENOMIC DNA]</scope>
    <source>
        <strain>H70</strain>
    </source>
</reference>
<organism>
    <name type="scientific">Streptococcus equi subsp. zooepidemicus (strain H70)</name>
    <dbReference type="NCBI Taxonomy" id="553483"/>
    <lineage>
        <taxon>Bacteria</taxon>
        <taxon>Bacillati</taxon>
        <taxon>Bacillota</taxon>
        <taxon>Bacilli</taxon>
        <taxon>Lactobacillales</taxon>
        <taxon>Streptococcaceae</taxon>
        <taxon>Streptococcus</taxon>
    </lineage>
</organism>
<keyword id="KW-0488">Methylation</keyword>
<keyword id="KW-0687">Ribonucleoprotein</keyword>
<keyword id="KW-0689">Ribosomal protein</keyword>
<keyword id="KW-0694">RNA-binding</keyword>
<keyword id="KW-0699">rRNA-binding</keyword>
<comment type="function">
    <text evidence="1">Forms part of the ribosomal stalk which helps the ribosome interact with GTP-bound translation factors.</text>
</comment>
<comment type="subunit">
    <text evidence="1">Part of the ribosomal stalk of the 50S ribosomal subunit. Interacts with L10 and the large rRNA to form the base of the stalk. L10 forms an elongated spine to which L12 dimers bind in a sequential fashion forming a multimeric L10(L12)X complex.</text>
</comment>
<comment type="PTM">
    <text evidence="1">One or more lysine residues are methylated.</text>
</comment>
<comment type="similarity">
    <text evidence="1">Belongs to the universal ribosomal protein uL11 family.</text>
</comment>
<evidence type="ECO:0000255" key="1">
    <source>
        <dbReference type="HAMAP-Rule" id="MF_00736"/>
    </source>
</evidence>
<evidence type="ECO:0000305" key="2"/>
<name>RL11_STRS7</name>
<sequence length="141" mass="14828">MAKKVEKLVKLQIPAGKATPAPPVGPALGQAGINIMGFTKEFNARTADQAGMIIPVVISVYEDKSFDFITKTPPAAVLLKKAAGVEKGSGTPNKTKVATVTRAQVQEIAETKMPDLNAANIEAAMRMIEGTARSMGFTVTD</sequence>